<dbReference type="EC" id="1.1.1.42" evidence="3"/>
<dbReference type="EMBL" id="AJ437268">
    <property type="protein sequence ID" value="CAD24782.1"/>
    <property type="molecule type" value="mRNA"/>
</dbReference>
<dbReference type="EMBL" id="AC009513">
    <property type="protein sequence ID" value="AAF06054.1"/>
    <property type="molecule type" value="Genomic_DNA"/>
</dbReference>
<dbReference type="EMBL" id="CP002684">
    <property type="protein sequence ID" value="AEE34442.1"/>
    <property type="molecule type" value="Genomic_DNA"/>
</dbReference>
<dbReference type="EMBL" id="AF419575">
    <property type="protein sequence ID" value="AAL31907.1"/>
    <property type="molecule type" value="mRNA"/>
</dbReference>
<dbReference type="EMBL" id="AY045631">
    <property type="protein sequence ID" value="AAK73989.1"/>
    <property type="molecule type" value="mRNA"/>
</dbReference>
<dbReference type="EMBL" id="AY093091">
    <property type="protein sequence ID" value="AAM13090.1"/>
    <property type="molecule type" value="mRNA"/>
</dbReference>
<dbReference type="EMBL" id="AY097340">
    <property type="protein sequence ID" value="AAM19856.1"/>
    <property type="molecule type" value="mRNA"/>
</dbReference>
<dbReference type="EMBL" id="BT002400">
    <property type="protein sequence ID" value="AAO00760.1"/>
    <property type="molecule type" value="mRNA"/>
</dbReference>
<dbReference type="EMBL" id="AY088129">
    <property type="protein sequence ID" value="AAM65674.1"/>
    <property type="molecule type" value="mRNA"/>
</dbReference>
<dbReference type="PIR" id="F96683">
    <property type="entry name" value="F96683"/>
</dbReference>
<dbReference type="RefSeq" id="NP_176768.1">
    <property type="nucleotide sequence ID" value="NM_105265.5"/>
</dbReference>
<dbReference type="SMR" id="Q9SRZ6"/>
<dbReference type="BioGRID" id="28126">
    <property type="interactions" value="6"/>
</dbReference>
<dbReference type="FunCoup" id="Q9SRZ6">
    <property type="interactions" value="3066"/>
</dbReference>
<dbReference type="IntAct" id="Q9SRZ6">
    <property type="interactions" value="2"/>
</dbReference>
<dbReference type="STRING" id="3702.Q9SRZ6"/>
<dbReference type="iPTMnet" id="Q9SRZ6"/>
<dbReference type="MetOSite" id="Q9SRZ6"/>
<dbReference type="PaxDb" id="3702-AT1G65930.1"/>
<dbReference type="ProteomicsDB" id="228756"/>
<dbReference type="EnsemblPlants" id="AT1G65930.1">
    <property type="protein sequence ID" value="AT1G65930.1"/>
    <property type="gene ID" value="AT1G65930"/>
</dbReference>
<dbReference type="GeneID" id="842905"/>
<dbReference type="Gramene" id="AT1G65930.1">
    <property type="protein sequence ID" value="AT1G65930.1"/>
    <property type="gene ID" value="AT1G65930"/>
</dbReference>
<dbReference type="KEGG" id="ath:AT1G65930"/>
<dbReference type="Araport" id="AT1G65930"/>
<dbReference type="TAIR" id="AT1G65930">
    <property type="gene designation" value="CICDH"/>
</dbReference>
<dbReference type="eggNOG" id="KOG1526">
    <property type="taxonomic scope" value="Eukaryota"/>
</dbReference>
<dbReference type="HOGENOM" id="CLU_023296_1_1_1"/>
<dbReference type="InParanoid" id="Q9SRZ6"/>
<dbReference type="OMA" id="HGTVQRH"/>
<dbReference type="OrthoDB" id="1041649at2759"/>
<dbReference type="PhylomeDB" id="Q9SRZ6"/>
<dbReference type="BioCyc" id="MetaCyc:AT1G65930-MONOMER"/>
<dbReference type="BRENDA" id="1.1.1.42">
    <property type="organism ID" value="399"/>
</dbReference>
<dbReference type="CD-CODE" id="4299E36E">
    <property type="entry name" value="Nucleolus"/>
</dbReference>
<dbReference type="PRO" id="PR:Q9SRZ6"/>
<dbReference type="Proteomes" id="UP000006548">
    <property type="component" value="Chromosome 1"/>
</dbReference>
<dbReference type="ExpressionAtlas" id="Q9SRZ6">
    <property type="expression patterns" value="baseline and differential"/>
</dbReference>
<dbReference type="GO" id="GO:0048046">
    <property type="term" value="C:apoplast"/>
    <property type="evidence" value="ECO:0007005"/>
    <property type="project" value="TAIR"/>
</dbReference>
<dbReference type="GO" id="GO:0009570">
    <property type="term" value="C:chloroplast stroma"/>
    <property type="evidence" value="ECO:0007005"/>
    <property type="project" value="TAIR"/>
</dbReference>
<dbReference type="GO" id="GO:0005829">
    <property type="term" value="C:cytosol"/>
    <property type="evidence" value="ECO:0007005"/>
    <property type="project" value="TAIR"/>
</dbReference>
<dbReference type="GO" id="GO:0005634">
    <property type="term" value="C:nucleus"/>
    <property type="evidence" value="ECO:0007005"/>
    <property type="project" value="TAIR"/>
</dbReference>
<dbReference type="GO" id="GO:0005886">
    <property type="term" value="C:plasma membrane"/>
    <property type="evidence" value="ECO:0007005"/>
    <property type="project" value="TAIR"/>
</dbReference>
<dbReference type="GO" id="GO:0009506">
    <property type="term" value="C:plasmodesma"/>
    <property type="evidence" value="ECO:0007005"/>
    <property type="project" value="TAIR"/>
</dbReference>
<dbReference type="GO" id="GO:0005507">
    <property type="term" value="F:copper ion binding"/>
    <property type="evidence" value="ECO:0007005"/>
    <property type="project" value="TAIR"/>
</dbReference>
<dbReference type="GO" id="GO:0004450">
    <property type="term" value="F:isocitrate dehydrogenase (NADP+) activity"/>
    <property type="evidence" value="ECO:0000315"/>
    <property type="project" value="TAIR"/>
</dbReference>
<dbReference type="GO" id="GO:0000287">
    <property type="term" value="F:magnesium ion binding"/>
    <property type="evidence" value="ECO:0007669"/>
    <property type="project" value="InterPro"/>
</dbReference>
<dbReference type="GO" id="GO:0051287">
    <property type="term" value="F:NAD binding"/>
    <property type="evidence" value="ECO:0007669"/>
    <property type="project" value="InterPro"/>
</dbReference>
<dbReference type="GO" id="GO:0042742">
    <property type="term" value="P:defense response to bacterium"/>
    <property type="evidence" value="ECO:0000315"/>
    <property type="project" value="TAIR"/>
</dbReference>
<dbReference type="GO" id="GO:0006102">
    <property type="term" value="P:isocitrate metabolic process"/>
    <property type="evidence" value="ECO:0000315"/>
    <property type="project" value="TAIR"/>
</dbReference>
<dbReference type="GO" id="GO:0006739">
    <property type="term" value="P:NADP metabolic process"/>
    <property type="evidence" value="ECO:0000315"/>
    <property type="project" value="TAIR"/>
</dbReference>
<dbReference type="GO" id="GO:0010043">
    <property type="term" value="P:response to zinc ion"/>
    <property type="evidence" value="ECO:0000270"/>
    <property type="project" value="TAIR"/>
</dbReference>
<dbReference type="GO" id="GO:0006099">
    <property type="term" value="P:tricarboxylic acid cycle"/>
    <property type="evidence" value="ECO:0007669"/>
    <property type="project" value="UniProtKB-KW"/>
</dbReference>
<dbReference type="FunFam" id="3.40.718.10:FF:000007">
    <property type="entry name" value="Isocitrate dehydrogenase [NADP]"/>
    <property type="match status" value="1"/>
</dbReference>
<dbReference type="Gene3D" id="3.40.718.10">
    <property type="entry name" value="Isopropylmalate Dehydrogenase"/>
    <property type="match status" value="1"/>
</dbReference>
<dbReference type="InterPro" id="IPR019818">
    <property type="entry name" value="IsoCit/isopropylmalate_DH_CS"/>
</dbReference>
<dbReference type="InterPro" id="IPR004790">
    <property type="entry name" value="Isocitrate_DH_NADP"/>
</dbReference>
<dbReference type="InterPro" id="IPR024084">
    <property type="entry name" value="IsoPropMal-DH-like_dom"/>
</dbReference>
<dbReference type="NCBIfam" id="TIGR00127">
    <property type="entry name" value="nadp_idh_euk"/>
    <property type="match status" value="1"/>
</dbReference>
<dbReference type="NCBIfam" id="NF006156">
    <property type="entry name" value="PRK08299.1"/>
    <property type="match status" value="1"/>
</dbReference>
<dbReference type="PANTHER" id="PTHR11822:SF21">
    <property type="entry name" value="ISOCITRATE DEHYDROGENASE [NADP], MITOCHONDRIAL"/>
    <property type="match status" value="1"/>
</dbReference>
<dbReference type="PANTHER" id="PTHR11822">
    <property type="entry name" value="NADP-SPECIFIC ISOCITRATE DEHYDROGENASE"/>
    <property type="match status" value="1"/>
</dbReference>
<dbReference type="Pfam" id="PF00180">
    <property type="entry name" value="Iso_dh"/>
    <property type="match status" value="1"/>
</dbReference>
<dbReference type="PIRSF" id="PIRSF000108">
    <property type="entry name" value="IDH_NADP"/>
    <property type="match status" value="1"/>
</dbReference>
<dbReference type="SMART" id="SM01329">
    <property type="entry name" value="Iso_dh"/>
    <property type="match status" value="1"/>
</dbReference>
<dbReference type="SUPFAM" id="SSF53659">
    <property type="entry name" value="Isocitrate/Isopropylmalate dehydrogenase-like"/>
    <property type="match status" value="1"/>
</dbReference>
<dbReference type="PROSITE" id="PS00470">
    <property type="entry name" value="IDH_IMDH"/>
    <property type="match status" value="1"/>
</dbReference>
<name>ICDHC_ARATH</name>
<comment type="function">
    <text evidence="3">May supply 2-oxoglutarate for amino acid biosynthesis and ammonia assimilation via the glutamine synthetase/glutamate synthase (GS/GOGAT) pathway. May be involved in the production of NADPH to promote redox signaling or homeostasis in response to oxidative stress, or redox signaling linked to defense responses.</text>
</comment>
<comment type="catalytic activity">
    <reaction evidence="3">
        <text>D-threo-isocitrate + NADP(+) = 2-oxoglutarate + CO2 + NADPH</text>
        <dbReference type="Rhea" id="RHEA:19629"/>
        <dbReference type="ChEBI" id="CHEBI:15562"/>
        <dbReference type="ChEBI" id="CHEBI:16526"/>
        <dbReference type="ChEBI" id="CHEBI:16810"/>
        <dbReference type="ChEBI" id="CHEBI:57783"/>
        <dbReference type="ChEBI" id="CHEBI:58349"/>
        <dbReference type="EC" id="1.1.1.42"/>
    </reaction>
    <physiologicalReaction direction="left-to-right" evidence="3">
        <dbReference type="Rhea" id="RHEA:19630"/>
    </physiologicalReaction>
</comment>
<comment type="cofactor">
    <cofactor evidence="1">
        <name>Mg(2+)</name>
        <dbReference type="ChEBI" id="CHEBI:18420"/>
    </cofactor>
    <cofactor evidence="1">
        <name>Mn(2+)</name>
        <dbReference type="ChEBI" id="CHEBI:29035"/>
    </cofactor>
    <text evidence="1">Binds 1 Mg(2+) or Mn(2+) ion per subunit.</text>
</comment>
<comment type="interaction">
    <interactant intactId="EBI-449319">
        <id>Q9SRZ6</id>
    </interactant>
    <interactant intactId="EBI-449157">
        <id>Q42403</id>
        <label>TRX3</label>
    </interactant>
    <organismsDiffer>false</organismsDiffer>
    <experiments>2</experiments>
</comment>
<comment type="subcellular location">
    <subcellularLocation>
        <location evidence="2">Cytoplasm</location>
        <location evidence="2">Cytosol</location>
    </subcellularLocation>
</comment>
<comment type="disruption phenotype">
    <text evidence="3">Slight reduction in plant growth. Constitutive expression of pathogenesis-related genes and enhanced resistance to the bacterial pathogen P.syringae pv. tomato.</text>
</comment>
<comment type="similarity">
    <text evidence="5">Belongs to the isocitrate and isopropylmalate dehydrogenases family.</text>
</comment>
<sequence>MAFEKIKVANPIVEMDGDEMTRVIWKSIKDKLITPFVELDIKYFDLGLPHRDATDDKVTIESAEATKKYNVAIKCATITPDEGRVTEFGLKQMWRSPNGTIRNILNGTVFREPIICKNVPKLVPGWTKPICIGRHAFGDQYRATDAVIKGPGKLTMTFEGKDGKTETEVFTFTGEGGVAMAMYNTDESIRAFADASMNTAYEKKWPLYLSTKNTILKKYDGRFKDIFQEVYEASWKSKYDAAGIWYEHRLIDDMVAYALKSEGGYVWACKNYDGDVQSDFLAQGFGSLGLMTSVLVCPDGKTIEAEAAHGTVTRHFRVHQKGGETSTNSIASIFAWTRGLAHRAKLDDNAKLLDFTEKLEAACVGTVESGKMTKDLALIIHGSKLSRDTYLNTEEFIDAVAAELKERLNA</sequence>
<evidence type="ECO:0000250" key="1">
    <source>
        <dbReference type="UniProtKB" id="O75874"/>
    </source>
</evidence>
<evidence type="ECO:0000255" key="2"/>
<evidence type="ECO:0000269" key="3">
    <source>
    </source>
</evidence>
<evidence type="ECO:0000303" key="4">
    <source>
    </source>
</evidence>
<evidence type="ECO:0000305" key="5"/>
<evidence type="ECO:0000312" key="6">
    <source>
        <dbReference type="Araport" id="AT1G65930"/>
    </source>
</evidence>
<evidence type="ECO:0000312" key="7">
    <source>
        <dbReference type="EMBL" id="AAF06054.1"/>
    </source>
</evidence>
<gene>
    <name evidence="4" type="primary">CICDH</name>
    <name evidence="6" type="ordered locus">At1g65930</name>
    <name evidence="7" type="ORF">F12P19.10</name>
</gene>
<reference key="1">
    <citation type="submission" date="2002-02" db="EMBL/GenBank/DDBJ databases">
        <title>Molecular cloning of a full length cDNA encoding for NADP+-isocitrate dehydrogenase from Arabidopsis thaliana.</title>
        <authorList>
            <person name="Pistelli L."/>
            <person name="De Bellis L."/>
            <person name="Alpi A."/>
            <person name="Gonzali S."/>
        </authorList>
    </citation>
    <scope>NUCLEOTIDE SEQUENCE [MRNA]</scope>
    <source>
        <strain>cv. Columbia</strain>
    </source>
</reference>
<reference key="2">
    <citation type="journal article" date="2000" name="Nature">
        <title>Sequence and analysis of chromosome 1 of the plant Arabidopsis thaliana.</title>
        <authorList>
            <person name="Theologis A."/>
            <person name="Ecker J.R."/>
            <person name="Palm C.J."/>
            <person name="Federspiel N.A."/>
            <person name="Kaul S."/>
            <person name="White O."/>
            <person name="Alonso J."/>
            <person name="Altafi H."/>
            <person name="Araujo R."/>
            <person name="Bowman C.L."/>
            <person name="Brooks S.Y."/>
            <person name="Buehler E."/>
            <person name="Chan A."/>
            <person name="Chao Q."/>
            <person name="Chen H."/>
            <person name="Cheuk R.F."/>
            <person name="Chin C.W."/>
            <person name="Chung M.K."/>
            <person name="Conn L."/>
            <person name="Conway A.B."/>
            <person name="Conway A.R."/>
            <person name="Creasy T.H."/>
            <person name="Dewar K."/>
            <person name="Dunn P."/>
            <person name="Etgu P."/>
            <person name="Feldblyum T.V."/>
            <person name="Feng J.-D."/>
            <person name="Fong B."/>
            <person name="Fujii C.Y."/>
            <person name="Gill J.E."/>
            <person name="Goldsmith A.D."/>
            <person name="Haas B."/>
            <person name="Hansen N.F."/>
            <person name="Hughes B."/>
            <person name="Huizar L."/>
            <person name="Hunter J.L."/>
            <person name="Jenkins J."/>
            <person name="Johnson-Hopson C."/>
            <person name="Khan S."/>
            <person name="Khaykin E."/>
            <person name="Kim C.J."/>
            <person name="Koo H.L."/>
            <person name="Kremenetskaia I."/>
            <person name="Kurtz D.B."/>
            <person name="Kwan A."/>
            <person name="Lam B."/>
            <person name="Langin-Hooper S."/>
            <person name="Lee A."/>
            <person name="Lee J.M."/>
            <person name="Lenz C.A."/>
            <person name="Li J.H."/>
            <person name="Li Y.-P."/>
            <person name="Lin X."/>
            <person name="Liu S.X."/>
            <person name="Liu Z.A."/>
            <person name="Luros J.S."/>
            <person name="Maiti R."/>
            <person name="Marziali A."/>
            <person name="Militscher J."/>
            <person name="Miranda M."/>
            <person name="Nguyen M."/>
            <person name="Nierman W.C."/>
            <person name="Osborne B.I."/>
            <person name="Pai G."/>
            <person name="Peterson J."/>
            <person name="Pham P.K."/>
            <person name="Rizzo M."/>
            <person name="Rooney T."/>
            <person name="Rowley D."/>
            <person name="Sakano H."/>
            <person name="Salzberg S.L."/>
            <person name="Schwartz J.R."/>
            <person name="Shinn P."/>
            <person name="Southwick A.M."/>
            <person name="Sun H."/>
            <person name="Tallon L.J."/>
            <person name="Tambunga G."/>
            <person name="Toriumi M.J."/>
            <person name="Town C.D."/>
            <person name="Utterback T."/>
            <person name="Van Aken S."/>
            <person name="Vaysberg M."/>
            <person name="Vysotskaia V.S."/>
            <person name="Walker M."/>
            <person name="Wu D."/>
            <person name="Yu G."/>
            <person name="Fraser C.M."/>
            <person name="Venter J.C."/>
            <person name="Davis R.W."/>
        </authorList>
    </citation>
    <scope>NUCLEOTIDE SEQUENCE [LARGE SCALE GENOMIC DNA]</scope>
    <source>
        <strain>cv. Columbia</strain>
    </source>
</reference>
<reference key="3">
    <citation type="journal article" date="2017" name="Plant J.">
        <title>Araport11: a complete reannotation of the Arabidopsis thaliana reference genome.</title>
        <authorList>
            <person name="Cheng C.Y."/>
            <person name="Krishnakumar V."/>
            <person name="Chan A.P."/>
            <person name="Thibaud-Nissen F."/>
            <person name="Schobel S."/>
            <person name="Town C.D."/>
        </authorList>
    </citation>
    <scope>GENOME REANNOTATION</scope>
    <source>
        <strain>cv. Columbia</strain>
    </source>
</reference>
<reference key="4">
    <citation type="journal article" date="2003" name="Science">
        <title>Empirical analysis of transcriptional activity in the Arabidopsis genome.</title>
        <authorList>
            <person name="Yamada K."/>
            <person name="Lim J."/>
            <person name="Dale J.M."/>
            <person name="Chen H."/>
            <person name="Shinn P."/>
            <person name="Palm C.J."/>
            <person name="Southwick A.M."/>
            <person name="Wu H.C."/>
            <person name="Kim C.J."/>
            <person name="Nguyen M."/>
            <person name="Pham P.K."/>
            <person name="Cheuk R.F."/>
            <person name="Karlin-Newmann G."/>
            <person name="Liu S.X."/>
            <person name="Lam B."/>
            <person name="Sakano H."/>
            <person name="Wu T."/>
            <person name="Yu G."/>
            <person name="Miranda M."/>
            <person name="Quach H.L."/>
            <person name="Tripp M."/>
            <person name="Chang C.H."/>
            <person name="Lee J.M."/>
            <person name="Toriumi M.J."/>
            <person name="Chan M.M."/>
            <person name="Tang C.C."/>
            <person name="Onodera C.S."/>
            <person name="Deng J.M."/>
            <person name="Akiyama K."/>
            <person name="Ansari Y."/>
            <person name="Arakawa T."/>
            <person name="Banh J."/>
            <person name="Banno F."/>
            <person name="Bowser L."/>
            <person name="Brooks S.Y."/>
            <person name="Carninci P."/>
            <person name="Chao Q."/>
            <person name="Choy N."/>
            <person name="Enju A."/>
            <person name="Goldsmith A.D."/>
            <person name="Gurjal M."/>
            <person name="Hansen N.F."/>
            <person name="Hayashizaki Y."/>
            <person name="Johnson-Hopson C."/>
            <person name="Hsuan V.W."/>
            <person name="Iida K."/>
            <person name="Karnes M."/>
            <person name="Khan S."/>
            <person name="Koesema E."/>
            <person name="Ishida J."/>
            <person name="Jiang P.X."/>
            <person name="Jones T."/>
            <person name="Kawai J."/>
            <person name="Kamiya A."/>
            <person name="Meyers C."/>
            <person name="Nakajima M."/>
            <person name="Narusaka M."/>
            <person name="Seki M."/>
            <person name="Sakurai T."/>
            <person name="Satou M."/>
            <person name="Tamse R."/>
            <person name="Vaysberg M."/>
            <person name="Wallender E.K."/>
            <person name="Wong C."/>
            <person name="Yamamura Y."/>
            <person name="Yuan S."/>
            <person name="Shinozaki K."/>
            <person name="Davis R.W."/>
            <person name="Theologis A."/>
            <person name="Ecker J.R."/>
        </authorList>
    </citation>
    <scope>NUCLEOTIDE SEQUENCE [LARGE SCALE MRNA]</scope>
    <source>
        <strain>cv. Columbia</strain>
    </source>
</reference>
<reference key="5">
    <citation type="submission" date="2002-03" db="EMBL/GenBank/DDBJ databases">
        <title>Full-length cDNA from Arabidopsis thaliana.</title>
        <authorList>
            <person name="Brover V.V."/>
            <person name="Troukhan M.E."/>
            <person name="Alexandrov N.A."/>
            <person name="Lu Y.-P."/>
            <person name="Flavell R.B."/>
            <person name="Feldmann K.A."/>
        </authorList>
    </citation>
    <scope>NUCLEOTIDE SEQUENCE [LARGE SCALE MRNA]</scope>
</reference>
<reference key="6">
    <citation type="journal article" date="2010" name="Plant Cell Environ.">
        <title>Cytosolic NADP-dependent isocitrate dehydrogenase contributes to redox homeostasis and the regulation of pathogen responses in Arabidopsis leaves.</title>
        <authorList>
            <person name="Mhamdi A."/>
            <person name="Mauve C."/>
            <person name="Gouia H."/>
            <person name="Saindrenan P."/>
            <person name="Hodges M."/>
            <person name="Noctor G."/>
        </authorList>
    </citation>
    <scope>FUNCTION</scope>
    <scope>CATALYTIC ACTIVITY</scope>
    <scope>DISRUPTION PHENOTYPE</scope>
</reference>
<accession>Q9SRZ6</accession>
<accession>Q8L9Z4</accession>
<accession>Q8RWH2</accession>
<accession>Q8RYD5</accession>
<organism>
    <name type="scientific">Arabidopsis thaliana</name>
    <name type="common">Mouse-ear cress</name>
    <dbReference type="NCBI Taxonomy" id="3702"/>
    <lineage>
        <taxon>Eukaryota</taxon>
        <taxon>Viridiplantae</taxon>
        <taxon>Streptophyta</taxon>
        <taxon>Embryophyta</taxon>
        <taxon>Tracheophyta</taxon>
        <taxon>Spermatophyta</taxon>
        <taxon>Magnoliopsida</taxon>
        <taxon>eudicotyledons</taxon>
        <taxon>Gunneridae</taxon>
        <taxon>Pentapetalae</taxon>
        <taxon>rosids</taxon>
        <taxon>malvids</taxon>
        <taxon>Brassicales</taxon>
        <taxon>Brassicaceae</taxon>
        <taxon>Camelineae</taxon>
        <taxon>Arabidopsis</taxon>
    </lineage>
</organism>
<keyword id="KW-0963">Cytoplasm</keyword>
<keyword id="KW-0460">Magnesium</keyword>
<keyword id="KW-0464">Manganese</keyword>
<keyword id="KW-0479">Metal-binding</keyword>
<keyword id="KW-0521">NADP</keyword>
<keyword id="KW-0560">Oxidoreductase</keyword>
<keyword id="KW-0611">Plant defense</keyword>
<keyword id="KW-1185">Reference proteome</keyword>
<keyword id="KW-0346">Stress response</keyword>
<keyword id="KW-0816">Tricarboxylic acid cycle</keyword>
<proteinExistence type="evidence at protein level"/>
<protein>
    <recommendedName>
        <fullName evidence="4">Cytosolic isocitrate dehydrogenase [NADP]</fullName>
        <ecNumber evidence="3">1.1.1.42</ecNumber>
    </recommendedName>
</protein>
<feature type="chain" id="PRO_0000421963" description="Cytosolic isocitrate dehydrogenase [NADP]">
    <location>
        <begin position="1"/>
        <end position="410"/>
    </location>
</feature>
<feature type="binding site" evidence="1">
    <location>
        <begin position="77"/>
        <end position="79"/>
    </location>
    <ligand>
        <name>NADP(+)</name>
        <dbReference type="ChEBI" id="CHEBI:58349"/>
    </ligand>
</feature>
<feature type="binding site" evidence="1">
    <location>
        <position position="79"/>
    </location>
    <ligand>
        <name>substrate</name>
    </ligand>
</feature>
<feature type="binding site" evidence="1">
    <location>
        <position position="84"/>
    </location>
    <ligand>
        <name>NADP(+)</name>
        <dbReference type="ChEBI" id="CHEBI:58349"/>
    </ligand>
</feature>
<feature type="binding site" evidence="1">
    <location>
        <begin position="96"/>
        <end position="102"/>
    </location>
    <ligand>
        <name>substrate</name>
    </ligand>
</feature>
<feature type="binding site" evidence="1">
    <location>
        <position position="111"/>
    </location>
    <ligand>
        <name>substrate</name>
    </ligand>
</feature>
<feature type="binding site" evidence="1">
    <location>
        <position position="134"/>
    </location>
    <ligand>
        <name>substrate</name>
    </ligand>
</feature>
<feature type="binding site" evidence="1">
    <location>
        <position position="260"/>
    </location>
    <ligand>
        <name>NADP(+)</name>
        <dbReference type="ChEBI" id="CHEBI:58349"/>
    </ligand>
</feature>
<feature type="binding site" evidence="1">
    <location>
        <position position="275"/>
    </location>
    <ligand>
        <name>Mn(2+)</name>
        <dbReference type="ChEBI" id="CHEBI:29035"/>
    </ligand>
</feature>
<feature type="binding site" evidence="1">
    <location>
        <position position="279"/>
    </location>
    <ligand>
        <name>Mn(2+)</name>
        <dbReference type="ChEBI" id="CHEBI:29035"/>
    </ligand>
</feature>
<feature type="binding site" evidence="1">
    <location>
        <begin position="310"/>
        <end position="315"/>
    </location>
    <ligand>
        <name>NADP(+)</name>
        <dbReference type="ChEBI" id="CHEBI:58349"/>
    </ligand>
</feature>
<feature type="binding site" evidence="1">
    <location>
        <position position="328"/>
    </location>
    <ligand>
        <name>NADP(+)</name>
        <dbReference type="ChEBI" id="CHEBI:58349"/>
    </ligand>
</feature>
<feature type="site" description="Critical for catalysis" evidence="1">
    <location>
        <position position="141"/>
    </location>
</feature>
<feature type="site" description="Critical for catalysis" evidence="1">
    <location>
        <position position="212"/>
    </location>
</feature>
<feature type="sequence conflict" description="In Ref. 1; CAD24782." evidence="5" ref="1">
    <original>A</original>
    <variation>V</variation>
    <location>
        <position position="181"/>
    </location>
</feature>
<feature type="sequence conflict" description="In Ref. 5; AAM65674." evidence="5" ref="5">
    <original>E</original>
    <variation>K</variation>
    <location>
        <position position="262"/>
    </location>
</feature>
<feature type="sequence conflict" description="In Ref. 1; CAD24782." evidence="5" ref="1">
    <original>F</original>
    <variation>L</variation>
    <location>
        <position position="280"/>
    </location>
</feature>
<feature type="sequence conflict" description="In Ref. 1; CAD24782." evidence="5" ref="1">
    <original>T</original>
    <variation>S</variation>
    <location>
        <position position="302"/>
    </location>
</feature>
<feature type="sequence conflict" description="In Ref. 5; AAM65674." evidence="5" ref="5">
    <original>G</original>
    <variation>A</variation>
    <location>
        <position position="322"/>
    </location>
</feature>
<feature type="sequence conflict" description="In Ref. 4; AAM13090." evidence="5" ref="4">
    <original>E</original>
    <variation>D</variation>
    <location>
        <position position="395"/>
    </location>
</feature>